<proteinExistence type="inferred from homology"/>
<name>THIC_NITHX</name>
<evidence type="ECO:0000255" key="1">
    <source>
        <dbReference type="HAMAP-Rule" id="MF_00089"/>
    </source>
</evidence>
<gene>
    <name evidence="1" type="primary">thiC</name>
    <name type="ordered locus">Nham_2896</name>
</gene>
<protein>
    <recommendedName>
        <fullName evidence="1">Phosphomethylpyrimidine synthase</fullName>
        <ecNumber evidence="1">4.1.99.17</ecNumber>
    </recommendedName>
    <alternativeName>
        <fullName evidence="1">Hydroxymethylpyrimidine phosphate synthase</fullName>
        <shortName evidence="1">HMP-P synthase</shortName>
        <shortName evidence="1">HMP-phosphate synthase</shortName>
        <shortName evidence="1">HMPP synthase</shortName>
    </alternativeName>
    <alternativeName>
        <fullName evidence="1">Thiamine biosynthesis protein ThiC</fullName>
    </alternativeName>
</protein>
<dbReference type="EC" id="4.1.99.17" evidence="1"/>
<dbReference type="EMBL" id="CP000319">
    <property type="protein sequence ID" value="ABE63664.1"/>
    <property type="molecule type" value="Genomic_DNA"/>
</dbReference>
<dbReference type="RefSeq" id="WP_011511328.1">
    <property type="nucleotide sequence ID" value="NC_007964.1"/>
</dbReference>
<dbReference type="SMR" id="Q1QJD3"/>
<dbReference type="STRING" id="323097.Nham_2896"/>
<dbReference type="KEGG" id="nha:Nham_2896"/>
<dbReference type="eggNOG" id="COG0422">
    <property type="taxonomic scope" value="Bacteria"/>
</dbReference>
<dbReference type="HOGENOM" id="CLU_013181_2_1_5"/>
<dbReference type="OrthoDB" id="9805897at2"/>
<dbReference type="UniPathway" id="UPA00060"/>
<dbReference type="Proteomes" id="UP000001953">
    <property type="component" value="Chromosome"/>
</dbReference>
<dbReference type="GO" id="GO:0005829">
    <property type="term" value="C:cytosol"/>
    <property type="evidence" value="ECO:0007669"/>
    <property type="project" value="TreeGrafter"/>
</dbReference>
<dbReference type="GO" id="GO:0051539">
    <property type="term" value="F:4 iron, 4 sulfur cluster binding"/>
    <property type="evidence" value="ECO:0007669"/>
    <property type="project" value="UniProtKB-KW"/>
</dbReference>
<dbReference type="GO" id="GO:0016830">
    <property type="term" value="F:carbon-carbon lyase activity"/>
    <property type="evidence" value="ECO:0007669"/>
    <property type="project" value="InterPro"/>
</dbReference>
<dbReference type="GO" id="GO:0008270">
    <property type="term" value="F:zinc ion binding"/>
    <property type="evidence" value="ECO:0007669"/>
    <property type="project" value="UniProtKB-UniRule"/>
</dbReference>
<dbReference type="GO" id="GO:0009228">
    <property type="term" value="P:thiamine biosynthetic process"/>
    <property type="evidence" value="ECO:0007669"/>
    <property type="project" value="UniProtKB-KW"/>
</dbReference>
<dbReference type="GO" id="GO:0009229">
    <property type="term" value="P:thiamine diphosphate biosynthetic process"/>
    <property type="evidence" value="ECO:0007669"/>
    <property type="project" value="UniProtKB-UniRule"/>
</dbReference>
<dbReference type="FunFam" id="3.20.20.540:FF:000001">
    <property type="entry name" value="Phosphomethylpyrimidine synthase"/>
    <property type="match status" value="1"/>
</dbReference>
<dbReference type="Gene3D" id="6.10.250.620">
    <property type="match status" value="1"/>
</dbReference>
<dbReference type="Gene3D" id="3.20.20.540">
    <property type="entry name" value="Radical SAM ThiC family, central domain"/>
    <property type="match status" value="1"/>
</dbReference>
<dbReference type="HAMAP" id="MF_00089">
    <property type="entry name" value="ThiC"/>
    <property type="match status" value="1"/>
</dbReference>
<dbReference type="InterPro" id="IPR037509">
    <property type="entry name" value="ThiC"/>
</dbReference>
<dbReference type="InterPro" id="IPR025747">
    <property type="entry name" value="ThiC-associated_dom"/>
</dbReference>
<dbReference type="InterPro" id="IPR038521">
    <property type="entry name" value="ThiC/Bza_core_dom"/>
</dbReference>
<dbReference type="InterPro" id="IPR002817">
    <property type="entry name" value="ThiC/BzaA/B"/>
</dbReference>
<dbReference type="NCBIfam" id="NF006763">
    <property type="entry name" value="PRK09284.1"/>
    <property type="match status" value="1"/>
</dbReference>
<dbReference type="NCBIfam" id="NF009895">
    <property type="entry name" value="PRK13352.1"/>
    <property type="match status" value="1"/>
</dbReference>
<dbReference type="NCBIfam" id="TIGR00190">
    <property type="entry name" value="thiC"/>
    <property type="match status" value="1"/>
</dbReference>
<dbReference type="PANTHER" id="PTHR30557:SF1">
    <property type="entry name" value="PHOSPHOMETHYLPYRIMIDINE SYNTHASE, CHLOROPLASTIC"/>
    <property type="match status" value="1"/>
</dbReference>
<dbReference type="PANTHER" id="PTHR30557">
    <property type="entry name" value="THIAMINE BIOSYNTHESIS PROTEIN THIC"/>
    <property type="match status" value="1"/>
</dbReference>
<dbReference type="Pfam" id="PF13667">
    <property type="entry name" value="ThiC-associated"/>
    <property type="match status" value="1"/>
</dbReference>
<dbReference type="Pfam" id="PF01964">
    <property type="entry name" value="ThiC_Rad_SAM"/>
    <property type="match status" value="1"/>
</dbReference>
<dbReference type="SFLD" id="SFLDF00407">
    <property type="entry name" value="phosphomethylpyrimidine_syntha"/>
    <property type="match status" value="1"/>
</dbReference>
<dbReference type="SFLD" id="SFLDG01114">
    <property type="entry name" value="phosphomethylpyrimidine_syntha"/>
    <property type="match status" value="1"/>
</dbReference>
<dbReference type="SFLD" id="SFLDS00113">
    <property type="entry name" value="Radical_SAM_Phosphomethylpyrim"/>
    <property type="match status" value="1"/>
</dbReference>
<comment type="function">
    <text evidence="1">Catalyzes the synthesis of the hydroxymethylpyrimidine phosphate (HMP-P) moiety of thiamine from aminoimidazole ribotide (AIR) in a radical S-adenosyl-L-methionine (SAM)-dependent reaction.</text>
</comment>
<comment type="catalytic activity">
    <reaction evidence="1">
        <text>5-amino-1-(5-phospho-beta-D-ribosyl)imidazole + S-adenosyl-L-methionine = 4-amino-2-methyl-5-(phosphooxymethyl)pyrimidine + CO + 5'-deoxyadenosine + formate + L-methionine + 3 H(+)</text>
        <dbReference type="Rhea" id="RHEA:24840"/>
        <dbReference type="ChEBI" id="CHEBI:15378"/>
        <dbReference type="ChEBI" id="CHEBI:15740"/>
        <dbReference type="ChEBI" id="CHEBI:17245"/>
        <dbReference type="ChEBI" id="CHEBI:17319"/>
        <dbReference type="ChEBI" id="CHEBI:57844"/>
        <dbReference type="ChEBI" id="CHEBI:58354"/>
        <dbReference type="ChEBI" id="CHEBI:59789"/>
        <dbReference type="ChEBI" id="CHEBI:137981"/>
        <dbReference type="EC" id="4.1.99.17"/>
    </reaction>
</comment>
<comment type="cofactor">
    <cofactor evidence="1">
        <name>[4Fe-4S] cluster</name>
        <dbReference type="ChEBI" id="CHEBI:49883"/>
    </cofactor>
    <text evidence="1">Binds 1 [4Fe-4S] cluster per subunit. The cluster is coordinated with 3 cysteines and an exchangeable S-adenosyl-L-methionine.</text>
</comment>
<comment type="pathway">
    <text evidence="1">Cofactor biosynthesis; thiamine diphosphate biosynthesis.</text>
</comment>
<comment type="subunit">
    <text evidence="1">Homodimer.</text>
</comment>
<comment type="similarity">
    <text evidence="1">Belongs to the ThiC family.</text>
</comment>
<organism>
    <name type="scientific">Nitrobacter hamburgensis (strain DSM 10229 / NCIMB 13809 / X14)</name>
    <dbReference type="NCBI Taxonomy" id="323097"/>
    <lineage>
        <taxon>Bacteria</taxon>
        <taxon>Pseudomonadati</taxon>
        <taxon>Pseudomonadota</taxon>
        <taxon>Alphaproteobacteria</taxon>
        <taxon>Hyphomicrobiales</taxon>
        <taxon>Nitrobacteraceae</taxon>
        <taxon>Nitrobacter</taxon>
    </lineage>
</organism>
<reference key="1">
    <citation type="submission" date="2006-03" db="EMBL/GenBank/DDBJ databases">
        <title>Complete sequence of chromosome of Nitrobacter hamburgensis X14.</title>
        <authorList>
            <consortium name="US DOE Joint Genome Institute"/>
            <person name="Copeland A."/>
            <person name="Lucas S."/>
            <person name="Lapidus A."/>
            <person name="Barry K."/>
            <person name="Detter J.C."/>
            <person name="Glavina del Rio T."/>
            <person name="Hammon N."/>
            <person name="Israni S."/>
            <person name="Dalin E."/>
            <person name="Tice H."/>
            <person name="Pitluck S."/>
            <person name="Chain P."/>
            <person name="Malfatti S."/>
            <person name="Shin M."/>
            <person name="Vergez L."/>
            <person name="Schmutz J."/>
            <person name="Larimer F."/>
            <person name="Land M."/>
            <person name="Hauser L."/>
            <person name="Kyrpides N."/>
            <person name="Ivanova N."/>
            <person name="Ward B."/>
            <person name="Arp D."/>
            <person name="Klotz M."/>
            <person name="Stein L."/>
            <person name="O'Mullan G."/>
            <person name="Starkenburg S."/>
            <person name="Sayavedra L."/>
            <person name="Poret-Peterson A.T."/>
            <person name="Gentry M.E."/>
            <person name="Bruce D."/>
            <person name="Richardson P."/>
        </authorList>
    </citation>
    <scope>NUCLEOTIDE SEQUENCE [LARGE SCALE GENOMIC DNA]</scope>
    <source>
        <strain>DSM 10229 / NCIMB 13809 / X14</strain>
    </source>
</reference>
<sequence length="643" mass="70662">MNIRSNPDTTRPAVTTGALPSSRKIFSVPEAAPDLLVPLREIVLSEGAGEPNLPVYDTSGPYTDPDVTIDVNAGLPRTRLAWVKERGGVEEYDGRVIKPEDNGNVGASHAATAFKAHHKPLRGVGDAPITQLEFARAGIITKEMIYVAERENIGRKQQLERAEAALADGESFGAAVPTFITPEFVREEIARGRAIIPANINHAELEPMIIGRNFLVKINANIGNSAVTSSVEEEVDKMVWAIRWGADTVMDLSTGRNIHTTREWILRNSPVPIGTVPIYQALEKCDGDPVKLTWELYRDTLVEQCEQGVDYFTIHAGVRLPYIHLTADRVTGIVSRGGSIMAKWCLAHHKESFLYTHFEEICDLMRKYDVSFSLGDGLRPGSIADANDRAQFAELETLGELTQIAWNKGCQVMIEGPGHVPMHKIKINMDKQLKECGEAPFYTLGPLTTDIAPGYDHITSGIGAAMIGWFGCAMLCYVTPKEHLGLPNRDDVKTGVITYRVAAHAADLAKGHPAAQLRDDALSRARFDFRWQDQFNLGLDPETAVAFHDETLPKEAHKVAHFCSMCGPKFCSMKITQDVRDYAATLGDNEKAALYPEGSKLASGMTMKGVIEDGMTQMSEKFKEMGGQVYVEAEAVKESNKVL</sequence>
<keyword id="KW-0004">4Fe-4S</keyword>
<keyword id="KW-0408">Iron</keyword>
<keyword id="KW-0411">Iron-sulfur</keyword>
<keyword id="KW-0456">Lyase</keyword>
<keyword id="KW-0479">Metal-binding</keyword>
<keyword id="KW-1185">Reference proteome</keyword>
<keyword id="KW-0949">S-adenosyl-L-methionine</keyword>
<keyword id="KW-0784">Thiamine biosynthesis</keyword>
<keyword id="KW-0862">Zinc</keyword>
<feature type="chain" id="PRO_1000004783" description="Phosphomethylpyrimidine synthase">
    <location>
        <begin position="1"/>
        <end position="643"/>
    </location>
</feature>
<feature type="binding site" evidence="1">
    <location>
        <position position="221"/>
    </location>
    <ligand>
        <name>substrate</name>
    </ligand>
</feature>
<feature type="binding site" evidence="1">
    <location>
        <position position="250"/>
    </location>
    <ligand>
        <name>substrate</name>
    </ligand>
</feature>
<feature type="binding site" evidence="1">
    <location>
        <position position="279"/>
    </location>
    <ligand>
        <name>substrate</name>
    </ligand>
</feature>
<feature type="binding site" evidence="1">
    <location>
        <position position="315"/>
    </location>
    <ligand>
        <name>substrate</name>
    </ligand>
</feature>
<feature type="binding site" evidence="1">
    <location>
        <begin position="335"/>
        <end position="337"/>
    </location>
    <ligand>
        <name>substrate</name>
    </ligand>
</feature>
<feature type="binding site" evidence="1">
    <location>
        <begin position="376"/>
        <end position="379"/>
    </location>
    <ligand>
        <name>substrate</name>
    </ligand>
</feature>
<feature type="binding site" evidence="1">
    <location>
        <position position="415"/>
    </location>
    <ligand>
        <name>substrate</name>
    </ligand>
</feature>
<feature type="binding site" evidence="1">
    <location>
        <position position="419"/>
    </location>
    <ligand>
        <name>Zn(2+)</name>
        <dbReference type="ChEBI" id="CHEBI:29105"/>
    </ligand>
</feature>
<feature type="binding site" evidence="1">
    <location>
        <position position="442"/>
    </location>
    <ligand>
        <name>substrate</name>
    </ligand>
</feature>
<feature type="binding site" evidence="1">
    <location>
        <position position="483"/>
    </location>
    <ligand>
        <name>Zn(2+)</name>
        <dbReference type="ChEBI" id="CHEBI:29105"/>
    </ligand>
</feature>
<feature type="binding site" evidence="1">
    <location>
        <position position="563"/>
    </location>
    <ligand>
        <name>[4Fe-4S] cluster</name>
        <dbReference type="ChEBI" id="CHEBI:49883"/>
        <note>4Fe-4S-S-AdoMet</note>
    </ligand>
</feature>
<feature type="binding site" evidence="1">
    <location>
        <position position="566"/>
    </location>
    <ligand>
        <name>[4Fe-4S] cluster</name>
        <dbReference type="ChEBI" id="CHEBI:49883"/>
        <note>4Fe-4S-S-AdoMet</note>
    </ligand>
</feature>
<feature type="binding site" evidence="1">
    <location>
        <position position="571"/>
    </location>
    <ligand>
        <name>[4Fe-4S] cluster</name>
        <dbReference type="ChEBI" id="CHEBI:49883"/>
        <note>4Fe-4S-S-AdoMet</note>
    </ligand>
</feature>
<accession>Q1QJD3</accession>